<feature type="chain" id="PRO_1000004752" description="Phosphomethylpyrimidine synthase">
    <location>
        <begin position="1"/>
        <end position="631"/>
    </location>
</feature>
<feature type="binding site" evidence="1">
    <location>
        <position position="239"/>
    </location>
    <ligand>
        <name>substrate</name>
    </ligand>
</feature>
<feature type="binding site" evidence="1">
    <location>
        <position position="268"/>
    </location>
    <ligand>
        <name>substrate</name>
    </ligand>
</feature>
<feature type="binding site" evidence="1">
    <location>
        <position position="297"/>
    </location>
    <ligand>
        <name>substrate</name>
    </ligand>
</feature>
<feature type="binding site" evidence="1">
    <location>
        <position position="333"/>
    </location>
    <ligand>
        <name>substrate</name>
    </ligand>
</feature>
<feature type="binding site" evidence="1">
    <location>
        <begin position="353"/>
        <end position="355"/>
    </location>
    <ligand>
        <name>substrate</name>
    </ligand>
</feature>
<feature type="binding site" evidence="1">
    <location>
        <begin position="394"/>
        <end position="397"/>
    </location>
    <ligand>
        <name>substrate</name>
    </ligand>
</feature>
<feature type="binding site" evidence="1">
    <location>
        <position position="433"/>
    </location>
    <ligand>
        <name>substrate</name>
    </ligand>
</feature>
<feature type="binding site" evidence="1">
    <location>
        <position position="437"/>
    </location>
    <ligand>
        <name>Zn(2+)</name>
        <dbReference type="ChEBI" id="CHEBI:29105"/>
    </ligand>
</feature>
<feature type="binding site" evidence="1">
    <location>
        <position position="460"/>
    </location>
    <ligand>
        <name>substrate</name>
    </ligand>
</feature>
<feature type="binding site" evidence="1">
    <location>
        <position position="501"/>
    </location>
    <ligand>
        <name>Zn(2+)</name>
        <dbReference type="ChEBI" id="CHEBI:29105"/>
    </ligand>
</feature>
<feature type="binding site" evidence="1">
    <location>
        <position position="581"/>
    </location>
    <ligand>
        <name>[4Fe-4S] cluster</name>
        <dbReference type="ChEBI" id="CHEBI:49883"/>
        <note>4Fe-4S-S-AdoMet</note>
    </ligand>
</feature>
<feature type="binding site" evidence="1">
    <location>
        <position position="584"/>
    </location>
    <ligand>
        <name>[4Fe-4S] cluster</name>
        <dbReference type="ChEBI" id="CHEBI:49883"/>
        <note>4Fe-4S-S-AdoMet</note>
    </ligand>
</feature>
<feature type="binding site" evidence="1">
    <location>
        <position position="589"/>
    </location>
    <ligand>
        <name>[4Fe-4S] cluster</name>
        <dbReference type="ChEBI" id="CHEBI:49883"/>
        <note>4Fe-4S-S-AdoMet</note>
    </ligand>
</feature>
<reference key="1">
    <citation type="submission" date="2007-08" db="EMBL/GenBank/DDBJ databases">
        <authorList>
            <consortium name="The Citrobacter koseri Genome Sequencing Project"/>
            <person name="McClelland M."/>
            <person name="Sanderson E.K."/>
            <person name="Porwollik S."/>
            <person name="Spieth J."/>
            <person name="Clifton W.S."/>
            <person name="Latreille P."/>
            <person name="Courtney L."/>
            <person name="Wang C."/>
            <person name="Pepin K."/>
            <person name="Bhonagiri V."/>
            <person name="Nash W."/>
            <person name="Johnson M."/>
            <person name="Thiruvilangam P."/>
            <person name="Wilson R."/>
        </authorList>
    </citation>
    <scope>NUCLEOTIDE SEQUENCE [LARGE SCALE GENOMIC DNA]</scope>
    <source>
        <strain>ATCC BAA-895 / CDC 4225-83 / SGSC4696</strain>
    </source>
</reference>
<sequence length="631" mass="70618">MSATKLTRREQRAQAQHFIDTLEGTAFPNSKRIYITGSQPDIRIPMREIQLSPTLIGGGKDNPQYEENEAIPVYDTSGPYGDPDVAINVQQGLAKLRQPWIEARADSEELTDRSSAYTKERLADDGLDELRFTGLLTPKRAKAGKCVTQLHYARQGIVTPEMEFIAIRENMGRERIRGDVLRQQHPGVGFGARLPENITPEFVRDEVAAGRAIIPANINHPESEPMIIGRNFLVKVNANIGNSAVTSSIEEEVEKLVWSTRWGADTVMDLSTGRYIHETREWILRNSPVPIGTVPIYQALEKVNGIAEDLTWEAFRDTLLEQAEQGVDYFTIHAGVLLRYVPMTAKRLTGIVSRGGSIMAKWCLSHHQENFLYEHFREICEICAAYDVSLSLGDGLRPGSIQDANDEAQFAELHTLGELTKIAWEYDVQVMIEGPGHVPMQMIRRNMTEELEHCHEAPFYTLGPLTTDIAPGYDHFTSGIGAAMIGWFGCAMLCYVTPKEHLGLPNKEDVKQGLITYKIAAHAADLAKGHPGAQIRDNAMSKARFEFRWEDQFNLALDPFTARAYHDETLPQESGKVAHFCSMCGPKFCSMKISQEVRDYAAAQTIEVGMADMSENFRAKGGEIYLRKEEA</sequence>
<gene>
    <name evidence="1" type="primary">thiC</name>
    <name type="ordered locus">CKO_02992</name>
</gene>
<protein>
    <recommendedName>
        <fullName evidence="1">Phosphomethylpyrimidine synthase</fullName>
        <ecNumber evidence="1">4.1.99.17</ecNumber>
    </recommendedName>
    <alternativeName>
        <fullName evidence="1">Hydroxymethylpyrimidine phosphate synthase</fullName>
        <shortName evidence="1">HMP-P synthase</shortName>
        <shortName evidence="1">HMP-phosphate synthase</shortName>
        <shortName evidence="1">HMPP synthase</shortName>
    </alternativeName>
    <alternativeName>
        <fullName evidence="1">Thiamine biosynthesis protein ThiC</fullName>
    </alternativeName>
</protein>
<organism>
    <name type="scientific">Citrobacter koseri (strain ATCC BAA-895 / CDC 4225-83 / SGSC4696)</name>
    <dbReference type="NCBI Taxonomy" id="290338"/>
    <lineage>
        <taxon>Bacteria</taxon>
        <taxon>Pseudomonadati</taxon>
        <taxon>Pseudomonadota</taxon>
        <taxon>Gammaproteobacteria</taxon>
        <taxon>Enterobacterales</taxon>
        <taxon>Enterobacteriaceae</taxon>
        <taxon>Citrobacter</taxon>
    </lineage>
</organism>
<proteinExistence type="inferred from homology"/>
<dbReference type="EC" id="4.1.99.17" evidence="1"/>
<dbReference type="EMBL" id="CP000822">
    <property type="protein sequence ID" value="ABV14092.1"/>
    <property type="molecule type" value="Genomic_DNA"/>
</dbReference>
<dbReference type="RefSeq" id="WP_012133801.1">
    <property type="nucleotide sequence ID" value="NC_009792.1"/>
</dbReference>
<dbReference type="SMR" id="A8AKS9"/>
<dbReference type="STRING" id="290338.CKO_02992"/>
<dbReference type="GeneID" id="45136806"/>
<dbReference type="KEGG" id="cko:CKO_02992"/>
<dbReference type="HOGENOM" id="CLU_013181_2_1_6"/>
<dbReference type="OrthoDB" id="9805897at2"/>
<dbReference type="UniPathway" id="UPA00060"/>
<dbReference type="Proteomes" id="UP000008148">
    <property type="component" value="Chromosome"/>
</dbReference>
<dbReference type="GO" id="GO:0005829">
    <property type="term" value="C:cytosol"/>
    <property type="evidence" value="ECO:0007669"/>
    <property type="project" value="TreeGrafter"/>
</dbReference>
<dbReference type="GO" id="GO:0051539">
    <property type="term" value="F:4 iron, 4 sulfur cluster binding"/>
    <property type="evidence" value="ECO:0007669"/>
    <property type="project" value="UniProtKB-KW"/>
</dbReference>
<dbReference type="GO" id="GO:0016830">
    <property type="term" value="F:carbon-carbon lyase activity"/>
    <property type="evidence" value="ECO:0007669"/>
    <property type="project" value="InterPro"/>
</dbReference>
<dbReference type="GO" id="GO:0008270">
    <property type="term" value="F:zinc ion binding"/>
    <property type="evidence" value="ECO:0007669"/>
    <property type="project" value="UniProtKB-UniRule"/>
</dbReference>
<dbReference type="GO" id="GO:0009228">
    <property type="term" value="P:thiamine biosynthetic process"/>
    <property type="evidence" value="ECO:0007669"/>
    <property type="project" value="UniProtKB-KW"/>
</dbReference>
<dbReference type="GO" id="GO:0009229">
    <property type="term" value="P:thiamine diphosphate biosynthetic process"/>
    <property type="evidence" value="ECO:0007669"/>
    <property type="project" value="UniProtKB-UniRule"/>
</dbReference>
<dbReference type="FunFam" id="3.20.20.540:FF:000001">
    <property type="entry name" value="Phosphomethylpyrimidine synthase"/>
    <property type="match status" value="1"/>
</dbReference>
<dbReference type="Gene3D" id="6.10.250.620">
    <property type="match status" value="1"/>
</dbReference>
<dbReference type="Gene3D" id="3.20.20.540">
    <property type="entry name" value="Radical SAM ThiC family, central domain"/>
    <property type="match status" value="1"/>
</dbReference>
<dbReference type="HAMAP" id="MF_00089">
    <property type="entry name" value="ThiC"/>
    <property type="match status" value="1"/>
</dbReference>
<dbReference type="InterPro" id="IPR037509">
    <property type="entry name" value="ThiC"/>
</dbReference>
<dbReference type="InterPro" id="IPR025747">
    <property type="entry name" value="ThiC-associated_dom"/>
</dbReference>
<dbReference type="InterPro" id="IPR038521">
    <property type="entry name" value="ThiC/Bza_core_dom"/>
</dbReference>
<dbReference type="InterPro" id="IPR002817">
    <property type="entry name" value="ThiC/BzaA/B"/>
</dbReference>
<dbReference type="NCBIfam" id="NF006763">
    <property type="entry name" value="PRK09284.1"/>
    <property type="match status" value="1"/>
</dbReference>
<dbReference type="NCBIfam" id="NF009895">
    <property type="entry name" value="PRK13352.1"/>
    <property type="match status" value="1"/>
</dbReference>
<dbReference type="NCBIfam" id="TIGR00190">
    <property type="entry name" value="thiC"/>
    <property type="match status" value="1"/>
</dbReference>
<dbReference type="PANTHER" id="PTHR30557:SF1">
    <property type="entry name" value="PHOSPHOMETHYLPYRIMIDINE SYNTHASE, CHLOROPLASTIC"/>
    <property type="match status" value="1"/>
</dbReference>
<dbReference type="PANTHER" id="PTHR30557">
    <property type="entry name" value="THIAMINE BIOSYNTHESIS PROTEIN THIC"/>
    <property type="match status" value="1"/>
</dbReference>
<dbReference type="Pfam" id="PF13667">
    <property type="entry name" value="ThiC-associated"/>
    <property type="match status" value="1"/>
</dbReference>
<dbReference type="Pfam" id="PF01964">
    <property type="entry name" value="ThiC_Rad_SAM"/>
    <property type="match status" value="1"/>
</dbReference>
<dbReference type="SFLD" id="SFLDF00407">
    <property type="entry name" value="phosphomethylpyrimidine_syntha"/>
    <property type="match status" value="1"/>
</dbReference>
<dbReference type="SFLD" id="SFLDG01114">
    <property type="entry name" value="phosphomethylpyrimidine_syntha"/>
    <property type="match status" value="1"/>
</dbReference>
<dbReference type="SFLD" id="SFLDS00113">
    <property type="entry name" value="Radical_SAM_Phosphomethylpyrim"/>
    <property type="match status" value="1"/>
</dbReference>
<keyword id="KW-0004">4Fe-4S</keyword>
<keyword id="KW-0408">Iron</keyword>
<keyword id="KW-0411">Iron-sulfur</keyword>
<keyword id="KW-0456">Lyase</keyword>
<keyword id="KW-0479">Metal-binding</keyword>
<keyword id="KW-1185">Reference proteome</keyword>
<keyword id="KW-0949">S-adenosyl-L-methionine</keyword>
<keyword id="KW-0784">Thiamine biosynthesis</keyword>
<keyword id="KW-0862">Zinc</keyword>
<comment type="function">
    <text evidence="1">Catalyzes the synthesis of the hydroxymethylpyrimidine phosphate (HMP-P) moiety of thiamine from aminoimidazole ribotide (AIR) in a radical S-adenosyl-L-methionine (SAM)-dependent reaction.</text>
</comment>
<comment type="catalytic activity">
    <reaction evidence="1">
        <text>5-amino-1-(5-phospho-beta-D-ribosyl)imidazole + S-adenosyl-L-methionine = 4-amino-2-methyl-5-(phosphooxymethyl)pyrimidine + CO + 5'-deoxyadenosine + formate + L-methionine + 3 H(+)</text>
        <dbReference type="Rhea" id="RHEA:24840"/>
        <dbReference type="ChEBI" id="CHEBI:15378"/>
        <dbReference type="ChEBI" id="CHEBI:15740"/>
        <dbReference type="ChEBI" id="CHEBI:17245"/>
        <dbReference type="ChEBI" id="CHEBI:17319"/>
        <dbReference type="ChEBI" id="CHEBI:57844"/>
        <dbReference type="ChEBI" id="CHEBI:58354"/>
        <dbReference type="ChEBI" id="CHEBI:59789"/>
        <dbReference type="ChEBI" id="CHEBI:137981"/>
        <dbReference type="EC" id="4.1.99.17"/>
    </reaction>
</comment>
<comment type="cofactor">
    <cofactor evidence="1">
        <name>[4Fe-4S] cluster</name>
        <dbReference type="ChEBI" id="CHEBI:49883"/>
    </cofactor>
    <text evidence="1">Binds 1 [4Fe-4S] cluster per subunit. The cluster is coordinated with 3 cysteines and an exchangeable S-adenosyl-L-methionine.</text>
</comment>
<comment type="pathway">
    <text evidence="1">Cofactor biosynthesis; thiamine diphosphate biosynthesis.</text>
</comment>
<comment type="subunit">
    <text evidence="1">Homodimer.</text>
</comment>
<comment type="similarity">
    <text evidence="1">Belongs to the ThiC family.</text>
</comment>
<evidence type="ECO:0000255" key="1">
    <source>
        <dbReference type="HAMAP-Rule" id="MF_00089"/>
    </source>
</evidence>
<accession>A8AKS9</accession>
<name>THIC_CITK8</name>